<dbReference type="EMBL" id="D00465">
    <property type="protein sequence ID" value="BAA00360.1"/>
    <property type="molecule type" value="Genomic_RNA"/>
</dbReference>
<dbReference type="PIR" id="JA0113">
    <property type="entry name" value="MNXRRW"/>
</dbReference>
<dbReference type="GO" id="GO:0030430">
    <property type="term" value="C:host cell cytoplasm"/>
    <property type="evidence" value="ECO:0007669"/>
    <property type="project" value="UniProtKB-SubCell"/>
</dbReference>
<dbReference type="GO" id="GO:0039624">
    <property type="term" value="C:viral outer capsid"/>
    <property type="evidence" value="ECO:0007669"/>
    <property type="project" value="UniProtKB-KW"/>
</dbReference>
<dbReference type="InterPro" id="IPR008776">
    <property type="entry name" value="Phyto_Pns9_10"/>
</dbReference>
<dbReference type="Pfam" id="PF05878">
    <property type="entry name" value="Phyto_Pns9_10"/>
    <property type="match status" value="1"/>
</dbReference>
<keyword id="KW-0167">Capsid protein</keyword>
<keyword id="KW-1035">Host cytoplasm</keyword>
<keyword id="KW-1152">Outer capsid protein</keyword>
<keyword id="KW-0946">Virion</keyword>
<reference key="1">
    <citation type="journal article" date="1989" name="J. Gen. Virol.">
        <title>Nucleotide sequence of rice dwarf virus genome segment 9.</title>
        <authorList>
            <person name="Uyeda I."/>
            <person name="Kudo H."/>
            <person name="Takahashi T."/>
            <person name="Sano T."/>
            <person name="Ohshima K."/>
            <person name="Matsumura T."/>
            <person name="Shikata E."/>
        </authorList>
    </citation>
    <scope>NUCLEOTIDE SEQUENCE [GENOMIC RNA]</scope>
</reference>
<evidence type="ECO:0000250" key="1"/>
<evidence type="ECO:0000256" key="2">
    <source>
        <dbReference type="SAM" id="MobiDB-lite"/>
    </source>
</evidence>
<evidence type="ECO:0000305" key="3"/>
<accession>P17381</accession>
<name>P9_RDV</name>
<organism>
    <name type="scientific">Rice dwarf virus</name>
    <name type="common">RDV</name>
    <dbReference type="NCBI Taxonomy" id="10991"/>
    <lineage>
        <taxon>Viruses</taxon>
        <taxon>Riboviria</taxon>
        <taxon>Orthornavirae</taxon>
        <taxon>Duplornaviricota</taxon>
        <taxon>Resentoviricetes</taxon>
        <taxon>Reovirales</taxon>
        <taxon>Sedoreoviridae</taxon>
        <taxon>Phytoreovirus</taxon>
    </lineage>
</organism>
<organismHost>
    <name type="scientific">Alopecurus aequalis</name>
    <dbReference type="NCBI Taxonomy" id="114194"/>
</organismHost>
<organismHost>
    <name type="scientific">Echinochloa crus-galli</name>
    <name type="common">Barnyard grass</name>
    <name type="synonym">Panicum crus-galli</name>
    <dbReference type="NCBI Taxonomy" id="90397"/>
</organismHost>
<organismHost>
    <name type="scientific">Nephotettix cincticeps</name>
    <name type="common">Green rice leafhopper</name>
    <name type="synonym">Selenocephalus cincticeps</name>
    <dbReference type="NCBI Taxonomy" id="94400"/>
</organismHost>
<organismHost>
    <name type="scientific">Oryza sativa</name>
    <name type="common">Rice</name>
    <dbReference type="NCBI Taxonomy" id="4530"/>
</organismHost>
<organismHost>
    <name type="scientific">Paspalum</name>
    <dbReference type="NCBI Taxonomy" id="147271"/>
</organismHost>
<feature type="chain" id="PRO_0000222796" description="Minor outer capsid protein P9">
    <location>
        <begin position="1"/>
        <end position="351"/>
    </location>
</feature>
<feature type="region of interest" description="Disordered" evidence="2">
    <location>
        <begin position="245"/>
        <end position="281"/>
    </location>
</feature>
<feature type="region of interest" description="Disordered" evidence="2">
    <location>
        <begin position="288"/>
        <end position="307"/>
    </location>
</feature>
<feature type="compositionally biased region" description="Basic and acidic residues" evidence="2">
    <location>
        <begin position="288"/>
        <end position="297"/>
    </location>
</feature>
<proteinExistence type="inferred from homology"/>
<comment type="function">
    <text evidence="1">Minor outer capsid protein.</text>
</comment>
<comment type="subcellular location">
    <subcellularLocation>
        <location evidence="3">Virion</location>
    </subcellularLocation>
    <subcellularLocation>
        <location evidence="1">Host cytoplasm</location>
    </subcellularLocation>
    <text evidence="1">Found in the peripheral regions of spherical cytoplasmic structures, called virus factories, that appear early after infection and are the site of viral replication and packaging.</text>
</comment>
<comment type="similarity">
    <text evidence="3">Belongs to the phytoreovirus minor outer capsid protein P9 family.</text>
</comment>
<protein>
    <recommendedName>
        <fullName>Minor outer capsid protein P9</fullName>
    </recommendedName>
</protein>
<sequence length="351" mass="38730">MGKLQDGIAIKRINDAITTFKNYKLGELEQGGSMAINTLSNVRAHVGLAWPAILRNCLIHTSSHLGFMKFMIDIATTWKVGAFTLLGSVGDEDPFTDVDLIYTKTCLHLGLKDNDFLQFPEEFAYEANSFLEAQSMNARVDMLTGVHNIEDKYVFRIESISKFLKAYYTASEDVAYLTGFIKPDGSKESILSAELLKAQVTSEVLRVRNLITTKIQQYINLYEDSQLPHFRRAALSYTQDWDVDGGVPAALPQPDTTDDESPVTKPGASAPTVSKGADQPEDEEIIHKKVDASKDAPPKAVSSGNVSARGIPAFLEDDMSEMDAPDGFHDYLTREHENNFDLAQLGLAPSV</sequence>